<gene>
    <name evidence="1" type="primary">gcvPA</name>
    <name type="ordered locus">Clim_0621</name>
</gene>
<sequence length="443" mass="47666">MPFIVNTDQDREEMLRSIGASSFDDLIADIPPEIRLDRALELFPALSEQEVMTLLEGLSSANSSSAGFVSFLGGGAYDHFIPSAVKSIVSRSEFYTAYTPYQAEVSQGTLQAIYEYQSMMCRLYDMDVANASMYDGATALAEAVLMAMTITGRELVVLAGKLSPYTGSVLKTYLEASGHGVIHQNRLENGIGSVDGLKGLMNDRVAAVVVQQPNFYGSLEEVEAIGAAARENGALFIVSADPVSLGILAAPGSYGADIAVGEGQPLGNHQNFGGPYLGIFTVRQPYVRKIPGRLVGMTKDREGNDGFILTLQTREQHIRREKATSNICTNQALCALQAAVYLSLLGKQGIREVAEQCTLKAHYLAGRITELPGYSLKYSAPFFREFVLETPLPAAVIISAMLEKGIFAGYDLSASGENGLLVAVTEKRTRAELDSFVQALAAL</sequence>
<dbReference type="EC" id="1.4.4.2" evidence="1"/>
<dbReference type="EMBL" id="CP001097">
    <property type="protein sequence ID" value="ACD89708.1"/>
    <property type="molecule type" value="Genomic_DNA"/>
</dbReference>
<dbReference type="RefSeq" id="WP_012465589.1">
    <property type="nucleotide sequence ID" value="NC_010803.1"/>
</dbReference>
<dbReference type="SMR" id="B3EH28"/>
<dbReference type="STRING" id="290315.Clim_0621"/>
<dbReference type="KEGG" id="cli:Clim_0621"/>
<dbReference type="eggNOG" id="COG0403">
    <property type="taxonomic scope" value="Bacteria"/>
</dbReference>
<dbReference type="HOGENOM" id="CLU_004620_0_2_10"/>
<dbReference type="OrthoDB" id="9801272at2"/>
<dbReference type="Proteomes" id="UP000008841">
    <property type="component" value="Chromosome"/>
</dbReference>
<dbReference type="GO" id="GO:0004375">
    <property type="term" value="F:glycine dehydrogenase (decarboxylating) activity"/>
    <property type="evidence" value="ECO:0007669"/>
    <property type="project" value="UniProtKB-EC"/>
</dbReference>
<dbReference type="GO" id="GO:0019464">
    <property type="term" value="P:glycine decarboxylation via glycine cleavage system"/>
    <property type="evidence" value="ECO:0007669"/>
    <property type="project" value="UniProtKB-UniRule"/>
</dbReference>
<dbReference type="GO" id="GO:0009116">
    <property type="term" value="P:nucleoside metabolic process"/>
    <property type="evidence" value="ECO:0007669"/>
    <property type="project" value="InterPro"/>
</dbReference>
<dbReference type="CDD" id="cd00613">
    <property type="entry name" value="GDC-P"/>
    <property type="match status" value="1"/>
</dbReference>
<dbReference type="Gene3D" id="3.90.1150.10">
    <property type="entry name" value="Aspartate Aminotransferase, domain 1"/>
    <property type="match status" value="1"/>
</dbReference>
<dbReference type="Gene3D" id="3.40.640.10">
    <property type="entry name" value="Type I PLP-dependent aspartate aminotransferase-like (Major domain)"/>
    <property type="match status" value="1"/>
</dbReference>
<dbReference type="HAMAP" id="MF_00712">
    <property type="entry name" value="GcvPA"/>
    <property type="match status" value="1"/>
</dbReference>
<dbReference type="InterPro" id="IPR023010">
    <property type="entry name" value="GcvPA"/>
</dbReference>
<dbReference type="InterPro" id="IPR049315">
    <property type="entry name" value="GDC-P_N"/>
</dbReference>
<dbReference type="InterPro" id="IPR020581">
    <property type="entry name" value="GDC_P"/>
</dbReference>
<dbReference type="InterPro" id="IPR015424">
    <property type="entry name" value="PyrdxlP-dep_Trfase"/>
</dbReference>
<dbReference type="InterPro" id="IPR015421">
    <property type="entry name" value="PyrdxlP-dep_Trfase_major"/>
</dbReference>
<dbReference type="InterPro" id="IPR015422">
    <property type="entry name" value="PyrdxlP-dep_Trfase_small"/>
</dbReference>
<dbReference type="NCBIfam" id="NF001696">
    <property type="entry name" value="PRK00451.1"/>
    <property type="match status" value="1"/>
</dbReference>
<dbReference type="PANTHER" id="PTHR42806">
    <property type="entry name" value="GLYCINE CLEAVAGE SYSTEM P-PROTEIN"/>
    <property type="match status" value="1"/>
</dbReference>
<dbReference type="PANTHER" id="PTHR42806:SF1">
    <property type="entry name" value="GLYCINE DEHYDROGENASE (DECARBOXYLATING)"/>
    <property type="match status" value="1"/>
</dbReference>
<dbReference type="Pfam" id="PF02347">
    <property type="entry name" value="GDC-P"/>
    <property type="match status" value="1"/>
</dbReference>
<dbReference type="PIRSF" id="PIRSF006815">
    <property type="entry name" value="GcvPA"/>
    <property type="match status" value="1"/>
</dbReference>
<dbReference type="SUPFAM" id="SSF53383">
    <property type="entry name" value="PLP-dependent transferases"/>
    <property type="match status" value="1"/>
</dbReference>
<organism>
    <name type="scientific">Chlorobium limicola (strain DSM 245 / NBRC 103803 / 6330)</name>
    <dbReference type="NCBI Taxonomy" id="290315"/>
    <lineage>
        <taxon>Bacteria</taxon>
        <taxon>Pseudomonadati</taxon>
        <taxon>Chlorobiota</taxon>
        <taxon>Chlorobiia</taxon>
        <taxon>Chlorobiales</taxon>
        <taxon>Chlorobiaceae</taxon>
        <taxon>Chlorobium/Pelodictyon group</taxon>
        <taxon>Chlorobium</taxon>
    </lineage>
</organism>
<feature type="chain" id="PRO_1000132473" description="Probable glycine dehydrogenase (decarboxylating) subunit 1">
    <location>
        <begin position="1"/>
        <end position="443"/>
    </location>
</feature>
<keyword id="KW-0560">Oxidoreductase</keyword>
<comment type="function">
    <text evidence="1">The glycine cleavage system catalyzes the degradation of glycine. The P protein binds the alpha-amino group of glycine through its pyridoxal phosphate cofactor; CO(2) is released and the remaining methylamine moiety is then transferred to the lipoamide cofactor of the H protein.</text>
</comment>
<comment type="catalytic activity">
    <reaction evidence="1">
        <text>N(6)-[(R)-lipoyl]-L-lysyl-[glycine-cleavage complex H protein] + glycine + H(+) = N(6)-[(R)-S(8)-aminomethyldihydrolipoyl]-L-lysyl-[glycine-cleavage complex H protein] + CO2</text>
        <dbReference type="Rhea" id="RHEA:24304"/>
        <dbReference type="Rhea" id="RHEA-COMP:10494"/>
        <dbReference type="Rhea" id="RHEA-COMP:10495"/>
        <dbReference type="ChEBI" id="CHEBI:15378"/>
        <dbReference type="ChEBI" id="CHEBI:16526"/>
        <dbReference type="ChEBI" id="CHEBI:57305"/>
        <dbReference type="ChEBI" id="CHEBI:83099"/>
        <dbReference type="ChEBI" id="CHEBI:83143"/>
        <dbReference type="EC" id="1.4.4.2"/>
    </reaction>
</comment>
<comment type="subunit">
    <text evidence="1">The glycine cleavage system is composed of four proteins: P, T, L and H. In this organism, the P 'protein' is a heterodimer of two subunits.</text>
</comment>
<comment type="similarity">
    <text evidence="1">Belongs to the GcvP family. N-terminal subunit subfamily.</text>
</comment>
<protein>
    <recommendedName>
        <fullName evidence="1">Probable glycine dehydrogenase (decarboxylating) subunit 1</fullName>
        <ecNumber evidence="1">1.4.4.2</ecNumber>
    </recommendedName>
    <alternativeName>
        <fullName evidence="1">Glycine cleavage system P-protein subunit 1</fullName>
    </alternativeName>
    <alternativeName>
        <fullName evidence="1">Glycine decarboxylase subunit 1</fullName>
    </alternativeName>
    <alternativeName>
        <fullName evidence="1">Glycine dehydrogenase (aminomethyl-transferring) subunit 1</fullName>
    </alternativeName>
</protein>
<evidence type="ECO:0000255" key="1">
    <source>
        <dbReference type="HAMAP-Rule" id="MF_00712"/>
    </source>
</evidence>
<accession>B3EH28</accession>
<proteinExistence type="inferred from homology"/>
<reference key="1">
    <citation type="submission" date="2008-05" db="EMBL/GenBank/DDBJ databases">
        <title>Complete sequence of Chlorobium limicola DSM 245.</title>
        <authorList>
            <consortium name="US DOE Joint Genome Institute"/>
            <person name="Lucas S."/>
            <person name="Copeland A."/>
            <person name="Lapidus A."/>
            <person name="Glavina del Rio T."/>
            <person name="Dalin E."/>
            <person name="Tice H."/>
            <person name="Bruce D."/>
            <person name="Goodwin L."/>
            <person name="Pitluck S."/>
            <person name="Schmutz J."/>
            <person name="Larimer F."/>
            <person name="Land M."/>
            <person name="Hauser L."/>
            <person name="Kyrpides N."/>
            <person name="Ovchinnikova G."/>
            <person name="Zhao F."/>
            <person name="Li T."/>
            <person name="Liu Z."/>
            <person name="Overmann J."/>
            <person name="Bryant D.A."/>
            <person name="Richardson P."/>
        </authorList>
    </citation>
    <scope>NUCLEOTIDE SEQUENCE [LARGE SCALE GENOMIC DNA]</scope>
    <source>
        <strain>DSM 245 / NBRC 103803 / 6330</strain>
    </source>
</reference>
<name>GCSPA_CHLL2</name>